<keyword id="KW-0002">3D-structure</keyword>
<keyword id="KW-0158">Chromosome</keyword>
<keyword id="KW-1017">Isopeptide bond</keyword>
<keyword id="KW-0539">Nucleus</keyword>
<keyword id="KW-1267">Proteomics identification</keyword>
<keyword id="KW-1185">Reference proteome</keyword>
<keyword id="KW-0832">Ubl conjugation</keyword>
<reference key="1">
    <citation type="journal article" date="2004" name="Nat. Genet.">
        <title>Complete sequencing and characterization of 21,243 full-length human cDNAs.</title>
        <authorList>
            <person name="Ota T."/>
            <person name="Suzuki Y."/>
            <person name="Nishikawa T."/>
            <person name="Otsuki T."/>
            <person name="Sugiyama T."/>
            <person name="Irie R."/>
            <person name="Wakamatsu A."/>
            <person name="Hayashi K."/>
            <person name="Sato H."/>
            <person name="Nagai K."/>
            <person name="Kimura K."/>
            <person name="Makita H."/>
            <person name="Sekine M."/>
            <person name="Obayashi M."/>
            <person name="Nishi T."/>
            <person name="Shibahara T."/>
            <person name="Tanaka T."/>
            <person name="Ishii S."/>
            <person name="Yamamoto J."/>
            <person name="Saito K."/>
            <person name="Kawai Y."/>
            <person name="Isono Y."/>
            <person name="Nakamura Y."/>
            <person name="Nagahari K."/>
            <person name="Murakami K."/>
            <person name="Yasuda T."/>
            <person name="Iwayanagi T."/>
            <person name="Wagatsuma M."/>
            <person name="Shiratori A."/>
            <person name="Sudo H."/>
            <person name="Hosoiri T."/>
            <person name="Kaku Y."/>
            <person name="Kodaira H."/>
            <person name="Kondo H."/>
            <person name="Sugawara M."/>
            <person name="Takahashi M."/>
            <person name="Kanda K."/>
            <person name="Yokoi T."/>
            <person name="Furuya T."/>
            <person name="Kikkawa E."/>
            <person name="Omura Y."/>
            <person name="Abe K."/>
            <person name="Kamihara K."/>
            <person name="Katsuta N."/>
            <person name="Sato K."/>
            <person name="Tanikawa M."/>
            <person name="Yamazaki M."/>
            <person name="Ninomiya K."/>
            <person name="Ishibashi T."/>
            <person name="Yamashita H."/>
            <person name="Murakawa K."/>
            <person name="Fujimori K."/>
            <person name="Tanai H."/>
            <person name="Kimata M."/>
            <person name="Watanabe M."/>
            <person name="Hiraoka S."/>
            <person name="Chiba Y."/>
            <person name="Ishida S."/>
            <person name="Ono Y."/>
            <person name="Takiguchi S."/>
            <person name="Watanabe S."/>
            <person name="Yosida M."/>
            <person name="Hotuta T."/>
            <person name="Kusano J."/>
            <person name="Kanehori K."/>
            <person name="Takahashi-Fujii A."/>
            <person name="Hara H."/>
            <person name="Tanase T.-O."/>
            <person name="Nomura Y."/>
            <person name="Togiya S."/>
            <person name="Komai F."/>
            <person name="Hara R."/>
            <person name="Takeuchi K."/>
            <person name="Arita M."/>
            <person name="Imose N."/>
            <person name="Musashino K."/>
            <person name="Yuuki H."/>
            <person name="Oshima A."/>
            <person name="Sasaki N."/>
            <person name="Aotsuka S."/>
            <person name="Yoshikawa Y."/>
            <person name="Matsunawa H."/>
            <person name="Ichihara T."/>
            <person name="Shiohata N."/>
            <person name="Sano S."/>
            <person name="Moriya S."/>
            <person name="Momiyama H."/>
            <person name="Satoh N."/>
            <person name="Takami S."/>
            <person name="Terashima Y."/>
            <person name="Suzuki O."/>
            <person name="Nakagawa S."/>
            <person name="Senoh A."/>
            <person name="Mizoguchi H."/>
            <person name="Goto Y."/>
            <person name="Shimizu F."/>
            <person name="Wakebe H."/>
            <person name="Hishigaki H."/>
            <person name="Watanabe T."/>
            <person name="Sugiyama A."/>
            <person name="Takemoto M."/>
            <person name="Kawakami B."/>
            <person name="Yamazaki M."/>
            <person name="Watanabe K."/>
            <person name="Kumagai A."/>
            <person name="Itakura S."/>
            <person name="Fukuzumi Y."/>
            <person name="Fujimori Y."/>
            <person name="Komiyama M."/>
            <person name="Tashiro H."/>
            <person name="Tanigami A."/>
            <person name="Fujiwara T."/>
            <person name="Ono T."/>
            <person name="Yamada K."/>
            <person name="Fujii Y."/>
            <person name="Ozaki K."/>
            <person name="Hirao M."/>
            <person name="Ohmori Y."/>
            <person name="Kawabata A."/>
            <person name="Hikiji T."/>
            <person name="Kobatake N."/>
            <person name="Inagaki H."/>
            <person name="Ikema Y."/>
            <person name="Okamoto S."/>
            <person name="Okitani R."/>
            <person name="Kawakami T."/>
            <person name="Noguchi S."/>
            <person name="Itoh T."/>
            <person name="Shigeta K."/>
            <person name="Senba T."/>
            <person name="Matsumura K."/>
            <person name="Nakajima Y."/>
            <person name="Mizuno T."/>
            <person name="Morinaga M."/>
            <person name="Sasaki M."/>
            <person name="Togashi T."/>
            <person name="Oyama M."/>
            <person name="Hata H."/>
            <person name="Watanabe M."/>
            <person name="Komatsu T."/>
            <person name="Mizushima-Sugano J."/>
            <person name="Satoh T."/>
            <person name="Shirai Y."/>
            <person name="Takahashi Y."/>
            <person name="Nakagawa K."/>
            <person name="Okumura K."/>
            <person name="Nagase T."/>
            <person name="Nomura N."/>
            <person name="Kikuchi H."/>
            <person name="Masuho Y."/>
            <person name="Yamashita R."/>
            <person name="Nakai K."/>
            <person name="Yada T."/>
            <person name="Nakamura Y."/>
            <person name="Ohara O."/>
            <person name="Isogai T."/>
            <person name="Sugano S."/>
        </authorList>
    </citation>
    <scope>NUCLEOTIDE SEQUENCE [LARGE SCALE MRNA]</scope>
    <source>
        <tissue>Brain</tissue>
    </source>
</reference>
<reference key="2">
    <citation type="journal article" date="2004" name="Genome Res.">
        <title>The status, quality, and expansion of the NIH full-length cDNA project: the Mammalian Gene Collection (MGC).</title>
        <authorList>
            <consortium name="The MGC Project Team"/>
        </authorList>
    </citation>
    <scope>NUCLEOTIDE SEQUENCE [LARGE SCALE MRNA]</scope>
    <source>
        <tissue>Kidney</tissue>
        <tissue>Skeletal muscle</tissue>
    </source>
</reference>
<reference key="3">
    <citation type="journal article" date="2010" name="Cell">
        <title>The protein composition of mitotic chromosomes determined using multiclassifier combinatorial proteomics.</title>
        <authorList>
            <person name="Ohta S."/>
            <person name="Bukowski-Wills J.C."/>
            <person name="Sanchez-Pulido L."/>
            <person name="Alves Fde L."/>
            <person name="Wood L."/>
            <person name="Chen Z.A."/>
            <person name="Platani M."/>
            <person name="Fischer L."/>
            <person name="Hudson D.F."/>
            <person name="Ponting C.P."/>
            <person name="Fukagawa T."/>
            <person name="Earnshaw W.C."/>
            <person name="Rappsilber J."/>
        </authorList>
    </citation>
    <scope>SUBCELLULAR LOCATION</scope>
</reference>
<reference key="4">
    <citation type="journal article" date="2014" name="Nat. Struct. Mol. Biol.">
        <title>Uncovering global SUMOylation signaling networks in a site-specific manner.</title>
        <authorList>
            <person name="Hendriks I.A."/>
            <person name="D'Souza R.C."/>
            <person name="Yang B."/>
            <person name="Verlaan-de Vries M."/>
            <person name="Mann M."/>
            <person name="Vertegaal A.C."/>
        </authorList>
    </citation>
    <scope>SUMOYLATION [LARGE SCALE ANALYSIS] AT LYS-67 AND LYS-74</scope>
    <scope>IDENTIFICATION BY MASS SPECTROMETRY [LARGE SCALE ANALYSIS]</scope>
</reference>
<reference key="5">
    <citation type="journal article" date="2015" name="Mol. Cell. Proteomics">
        <title>System-wide analysis of SUMOylation dynamics in response to replication stress reveals novel small ubiquitin-like modified target proteins and acceptor lysines relevant for genome stability.</title>
        <authorList>
            <person name="Xiao Z."/>
            <person name="Chang J.G."/>
            <person name="Hendriks I.A."/>
            <person name="Sigurdsson J.O."/>
            <person name="Olsen J.V."/>
            <person name="Vertegaal A.C."/>
        </authorList>
    </citation>
    <scope>SUMOYLATION [LARGE SCALE ANALYSIS] AT LYS-67</scope>
    <scope>IDENTIFICATION BY MASS SPECTROMETRY [LARGE SCALE ANALYSIS]</scope>
</reference>
<reference key="6">
    <citation type="journal article" date="2017" name="Nat. Struct. Mol. Biol.">
        <title>Site-specific mapping of the human SUMO proteome reveals co-modification with phosphorylation.</title>
        <authorList>
            <person name="Hendriks I.A."/>
            <person name="Lyon D."/>
            <person name="Young C."/>
            <person name="Jensen L.J."/>
            <person name="Vertegaal A.C."/>
            <person name="Nielsen M.L."/>
        </authorList>
    </citation>
    <scope>SUMOYLATION [LARGE SCALE ANALYSIS] AT LYS-67 AND LYS-74</scope>
    <scope>IDENTIFICATION BY MASS SPECTROMETRY [LARGE SCALE ANALYSIS]</scope>
</reference>
<reference evidence="6 7" key="7">
    <citation type="journal article" date="2020" name="Nat. Commun.">
        <title>Structural snapshots of human pre-60S ribosomal particles before and after nuclear export.</title>
        <authorList>
            <person name="Liang X."/>
            <person name="Zuo M.Q."/>
            <person name="Zhang Y."/>
            <person name="Li N."/>
            <person name="Ma C."/>
            <person name="Dong M.Q."/>
            <person name="Gao N."/>
        </authorList>
    </citation>
    <scope>STRUCTURE BY ELECTRON MICROSCOPY (3.13 ANGSTROMS) IN COMPLEX WITH THE 60S PRE-RIBOSOME</scope>
</reference>
<accession>Q9BRT6</accession>
<accession>Q3B766</accession>
<dbReference type="EMBL" id="AK091568">
    <property type="protein sequence ID" value="BAC03699.1"/>
    <property type="molecule type" value="mRNA"/>
</dbReference>
<dbReference type="EMBL" id="BC006002">
    <property type="protein sequence ID" value="AAH06002.1"/>
    <property type="molecule type" value="mRNA"/>
</dbReference>
<dbReference type="EMBL" id="BC070232">
    <property type="protein sequence ID" value="AAH70232.1"/>
    <property type="molecule type" value="mRNA"/>
</dbReference>
<dbReference type="EMBL" id="BC107780">
    <property type="protein sequence ID" value="AAI07781.1"/>
    <property type="molecule type" value="mRNA"/>
</dbReference>
<dbReference type="CCDS" id="CCDS8974.1"/>
<dbReference type="RefSeq" id="NP_115714.1">
    <property type="nucleotide sequence ID" value="NM_032338.4"/>
</dbReference>
<dbReference type="PDB" id="6LSS">
    <property type="method" value="EM"/>
    <property type="resolution" value="3.23 A"/>
    <property type="chains" value="z=1-129"/>
</dbReference>
<dbReference type="PDB" id="6LU8">
    <property type="method" value="EM"/>
    <property type="resolution" value="3.13 A"/>
    <property type="chains" value="z=1-129"/>
</dbReference>
<dbReference type="PDB" id="8FKT">
    <property type="method" value="EM"/>
    <property type="resolution" value="2.81 A"/>
    <property type="chains" value="NK=1-129"/>
</dbReference>
<dbReference type="PDB" id="8FKU">
    <property type="method" value="EM"/>
    <property type="resolution" value="2.82 A"/>
    <property type="chains" value="NK=1-129"/>
</dbReference>
<dbReference type="PDB" id="8FKV">
    <property type="method" value="EM"/>
    <property type="resolution" value="2.47 A"/>
    <property type="chains" value="NK=1-129"/>
</dbReference>
<dbReference type="PDB" id="8FKW">
    <property type="method" value="EM"/>
    <property type="resolution" value="2.50 A"/>
    <property type="chains" value="NK=1-129"/>
</dbReference>
<dbReference type="PDB" id="8FKX">
    <property type="method" value="EM"/>
    <property type="resolution" value="2.59 A"/>
    <property type="chains" value="NK=1-129"/>
</dbReference>
<dbReference type="PDB" id="8FKY">
    <property type="method" value="EM"/>
    <property type="resolution" value="2.67 A"/>
    <property type="chains" value="NK=1-129"/>
</dbReference>
<dbReference type="PDB" id="8FKZ">
    <property type="method" value="EM"/>
    <property type="resolution" value="3.04 A"/>
    <property type="chains" value="NK=1-129"/>
</dbReference>
<dbReference type="PDB" id="8FL0">
    <property type="method" value="EM"/>
    <property type="resolution" value="2.91 A"/>
    <property type="chains" value="NK=1-129"/>
</dbReference>
<dbReference type="PDB" id="8FL2">
    <property type="method" value="EM"/>
    <property type="resolution" value="2.67 A"/>
    <property type="chains" value="NK=1-129"/>
</dbReference>
<dbReference type="PDB" id="8FL3">
    <property type="method" value="EM"/>
    <property type="resolution" value="2.53 A"/>
    <property type="chains" value="NK=1-129"/>
</dbReference>
<dbReference type="PDB" id="8FL4">
    <property type="method" value="EM"/>
    <property type="resolution" value="2.89 A"/>
    <property type="chains" value="NK=1-129"/>
</dbReference>
<dbReference type="PDB" id="8FL6">
    <property type="method" value="EM"/>
    <property type="resolution" value="2.62 A"/>
    <property type="chains" value="NK=1-129"/>
</dbReference>
<dbReference type="PDB" id="8FL7">
    <property type="method" value="EM"/>
    <property type="resolution" value="2.55 A"/>
    <property type="chains" value="NK=1-129"/>
</dbReference>
<dbReference type="PDB" id="8FL9">
    <property type="method" value="EM"/>
    <property type="resolution" value="2.75 A"/>
    <property type="chains" value="NK=1-129"/>
</dbReference>
<dbReference type="PDB" id="8FLA">
    <property type="method" value="EM"/>
    <property type="resolution" value="2.63 A"/>
    <property type="chains" value="NK=1-129"/>
</dbReference>
<dbReference type="PDB" id="8FLB">
    <property type="method" value="EM"/>
    <property type="resolution" value="2.55 A"/>
    <property type="chains" value="NK=1-129"/>
</dbReference>
<dbReference type="PDB" id="8FLC">
    <property type="method" value="EM"/>
    <property type="resolution" value="2.76 A"/>
    <property type="chains" value="NK=1-129"/>
</dbReference>
<dbReference type="PDB" id="8FLD">
    <property type="method" value="EM"/>
    <property type="resolution" value="2.58 A"/>
    <property type="chains" value="NK=1-129"/>
</dbReference>
<dbReference type="PDB" id="8FLE">
    <property type="method" value="EM"/>
    <property type="resolution" value="2.48 A"/>
    <property type="chains" value="NK=1-129"/>
</dbReference>
<dbReference type="PDB" id="8FLF">
    <property type="method" value="EM"/>
    <property type="resolution" value="2.65 A"/>
    <property type="chains" value="NK=1-129"/>
</dbReference>
<dbReference type="PDB" id="8IDT">
    <property type="method" value="EM"/>
    <property type="resolution" value="2.80 A"/>
    <property type="chains" value="z=1-129"/>
</dbReference>
<dbReference type="PDB" id="8IDY">
    <property type="method" value="EM"/>
    <property type="resolution" value="3.00 A"/>
    <property type="chains" value="z=1-129"/>
</dbReference>
<dbReference type="PDB" id="8IE3">
    <property type="method" value="EM"/>
    <property type="resolution" value="3.30 A"/>
    <property type="chains" value="z=1-129"/>
</dbReference>
<dbReference type="PDB" id="8INE">
    <property type="method" value="EM"/>
    <property type="resolution" value="3.20 A"/>
    <property type="chains" value="z=1-129"/>
</dbReference>
<dbReference type="PDB" id="8INF">
    <property type="method" value="EM"/>
    <property type="resolution" value="3.00 A"/>
    <property type="chains" value="z=1-129"/>
</dbReference>
<dbReference type="PDB" id="8INK">
    <property type="method" value="EM"/>
    <property type="resolution" value="3.20 A"/>
    <property type="chains" value="z=1-129"/>
</dbReference>
<dbReference type="PDB" id="8IPD">
    <property type="method" value="EM"/>
    <property type="resolution" value="3.20 A"/>
    <property type="chains" value="z=1-129"/>
</dbReference>
<dbReference type="PDB" id="8IPX">
    <property type="method" value="EM"/>
    <property type="resolution" value="4.30 A"/>
    <property type="chains" value="z=1-129"/>
</dbReference>
<dbReference type="PDB" id="8IPY">
    <property type="method" value="EM"/>
    <property type="resolution" value="3.20 A"/>
    <property type="chains" value="z=1-129"/>
</dbReference>
<dbReference type="PDB" id="8IR1">
    <property type="method" value="EM"/>
    <property type="resolution" value="3.30 A"/>
    <property type="chains" value="z=1-129"/>
</dbReference>
<dbReference type="PDB" id="8IR3">
    <property type="method" value="EM"/>
    <property type="resolution" value="3.50 A"/>
    <property type="chains" value="z=1-129"/>
</dbReference>
<dbReference type="PDB" id="8RL2">
    <property type="method" value="EM"/>
    <property type="resolution" value="2.84 A"/>
    <property type="chains" value="CE=1-129"/>
</dbReference>
<dbReference type="PDBsum" id="6LSS"/>
<dbReference type="PDBsum" id="6LU8"/>
<dbReference type="PDBsum" id="8FKT"/>
<dbReference type="PDBsum" id="8FKU"/>
<dbReference type="PDBsum" id="8FKV"/>
<dbReference type="PDBsum" id="8FKW"/>
<dbReference type="PDBsum" id="8FKX"/>
<dbReference type="PDBsum" id="8FKY"/>
<dbReference type="PDBsum" id="8FKZ"/>
<dbReference type="PDBsum" id="8FL0"/>
<dbReference type="PDBsum" id="8FL2"/>
<dbReference type="PDBsum" id="8FL3"/>
<dbReference type="PDBsum" id="8FL4"/>
<dbReference type="PDBsum" id="8FL6"/>
<dbReference type="PDBsum" id="8FL7"/>
<dbReference type="PDBsum" id="8FL9"/>
<dbReference type="PDBsum" id="8FLA"/>
<dbReference type="PDBsum" id="8FLB"/>
<dbReference type="PDBsum" id="8FLC"/>
<dbReference type="PDBsum" id="8FLD"/>
<dbReference type="PDBsum" id="8FLE"/>
<dbReference type="PDBsum" id="8FLF"/>
<dbReference type="PDBsum" id="8IDT"/>
<dbReference type="PDBsum" id="8IDY"/>
<dbReference type="PDBsum" id="8IE3"/>
<dbReference type="PDBsum" id="8INE"/>
<dbReference type="PDBsum" id="8INF"/>
<dbReference type="PDBsum" id="8INK"/>
<dbReference type="PDBsum" id="8IPD"/>
<dbReference type="PDBsum" id="8IPX"/>
<dbReference type="PDBsum" id="8IPY"/>
<dbReference type="PDBsum" id="8IR1"/>
<dbReference type="PDBsum" id="8IR3"/>
<dbReference type="PDBsum" id="8RL2"/>
<dbReference type="EMDB" id="EMD-0964"/>
<dbReference type="EMDB" id="EMD-0978"/>
<dbReference type="EMDB" id="EMD-19330"/>
<dbReference type="EMDB" id="EMD-29256"/>
<dbReference type="EMDB" id="EMD-29257"/>
<dbReference type="EMDB" id="EMD-29258"/>
<dbReference type="EMDB" id="EMD-29259"/>
<dbReference type="EMDB" id="EMD-29260"/>
<dbReference type="EMDB" id="EMD-29261"/>
<dbReference type="EMDB" id="EMD-29262"/>
<dbReference type="EMDB" id="EMD-29263"/>
<dbReference type="EMDB" id="EMD-29265"/>
<dbReference type="EMDB" id="EMD-29266"/>
<dbReference type="EMDB" id="EMD-29267"/>
<dbReference type="EMDB" id="EMD-29268"/>
<dbReference type="EMDB" id="EMD-29269"/>
<dbReference type="EMDB" id="EMD-29271"/>
<dbReference type="EMDB" id="EMD-29272"/>
<dbReference type="EMDB" id="EMD-29273"/>
<dbReference type="EMDB" id="EMD-29274"/>
<dbReference type="EMDB" id="EMD-29275"/>
<dbReference type="EMDB" id="EMD-29276"/>
<dbReference type="EMDB" id="EMD-29277"/>
<dbReference type="EMDB" id="EMD-35370"/>
<dbReference type="EMDB" id="EMD-35371"/>
<dbReference type="EMDB" id="EMD-35375"/>
<dbReference type="EMDB" id="EMD-35596"/>
<dbReference type="EMDB" id="EMD-35597"/>
<dbReference type="EMDB" id="EMD-35599"/>
<dbReference type="EMDB" id="EMD-35639"/>
<dbReference type="EMDB" id="EMD-35649"/>
<dbReference type="EMDB" id="EMD-35651"/>
<dbReference type="EMDB" id="EMD-35672"/>
<dbReference type="EMDB" id="EMD-35673"/>
<dbReference type="SMR" id="Q9BRT6"/>
<dbReference type="BioGRID" id="124024">
    <property type="interactions" value="148"/>
</dbReference>
<dbReference type="FunCoup" id="Q9BRT6">
    <property type="interactions" value="1215"/>
</dbReference>
<dbReference type="IntAct" id="Q9BRT6">
    <property type="interactions" value="114"/>
</dbReference>
<dbReference type="MINT" id="Q9BRT6"/>
<dbReference type="STRING" id="9606.ENSP00000266604"/>
<dbReference type="GlyGen" id="Q9BRT6">
    <property type="glycosylation" value="1 site, 1 O-linked glycan (1 site)"/>
</dbReference>
<dbReference type="iPTMnet" id="Q9BRT6"/>
<dbReference type="MetOSite" id="Q9BRT6"/>
<dbReference type="PhosphoSitePlus" id="Q9BRT6"/>
<dbReference type="BioMuta" id="LLPH"/>
<dbReference type="DMDM" id="74732927"/>
<dbReference type="jPOST" id="Q9BRT6"/>
<dbReference type="MassIVE" id="Q9BRT6"/>
<dbReference type="PaxDb" id="9606-ENSP00000266604"/>
<dbReference type="PeptideAtlas" id="Q9BRT6"/>
<dbReference type="ProteomicsDB" id="78829"/>
<dbReference type="Pumba" id="Q9BRT6"/>
<dbReference type="Antibodypedia" id="53204">
    <property type="antibodies" value="99 antibodies from 19 providers"/>
</dbReference>
<dbReference type="DNASU" id="84298"/>
<dbReference type="Ensembl" id="ENST00000266604.7">
    <property type="protein sequence ID" value="ENSP00000266604.2"/>
    <property type="gene ID" value="ENSG00000139233.7"/>
</dbReference>
<dbReference type="Ensembl" id="ENST00000446587.2">
    <property type="protein sequence ID" value="ENSP00000437372.1"/>
    <property type="gene ID" value="ENSG00000139233.7"/>
</dbReference>
<dbReference type="GeneID" id="84298"/>
<dbReference type="KEGG" id="hsa:84298"/>
<dbReference type="MANE-Select" id="ENST00000266604.7">
    <property type="protein sequence ID" value="ENSP00000266604.2"/>
    <property type="RefSeq nucleotide sequence ID" value="NM_032338.4"/>
    <property type="RefSeq protein sequence ID" value="NP_115714.1"/>
</dbReference>
<dbReference type="UCSC" id="uc010ssw.3">
    <property type="organism name" value="human"/>
</dbReference>
<dbReference type="AGR" id="HGNC:28229"/>
<dbReference type="CTD" id="84298"/>
<dbReference type="DisGeNET" id="84298"/>
<dbReference type="GeneCards" id="LLPH"/>
<dbReference type="HGNC" id="HGNC:28229">
    <property type="gene designation" value="LLPH"/>
</dbReference>
<dbReference type="HPA" id="ENSG00000139233">
    <property type="expression patterns" value="Low tissue specificity"/>
</dbReference>
<dbReference type="MIM" id="616998">
    <property type="type" value="gene"/>
</dbReference>
<dbReference type="neXtProt" id="NX_Q9BRT6"/>
<dbReference type="OpenTargets" id="ENSG00000139233"/>
<dbReference type="PharmGKB" id="PA164722116"/>
<dbReference type="VEuPathDB" id="HostDB:ENSG00000139233"/>
<dbReference type="eggNOG" id="KOG4811">
    <property type="taxonomic scope" value="Eukaryota"/>
</dbReference>
<dbReference type="GeneTree" id="ENSGT00390000012979"/>
<dbReference type="HOGENOM" id="CLU_134502_0_0_1"/>
<dbReference type="InParanoid" id="Q9BRT6"/>
<dbReference type="OMA" id="YGNYPVW"/>
<dbReference type="OrthoDB" id="6257894at2759"/>
<dbReference type="PAN-GO" id="Q9BRT6">
    <property type="GO annotations" value="3 GO annotations based on evolutionary models"/>
</dbReference>
<dbReference type="PhylomeDB" id="Q9BRT6"/>
<dbReference type="TreeFam" id="TF314654"/>
<dbReference type="PathwayCommons" id="Q9BRT6"/>
<dbReference type="SignaLink" id="Q9BRT6"/>
<dbReference type="BioGRID-ORCS" id="84298">
    <property type="hits" value="193 hits in 1075 CRISPR screens"/>
</dbReference>
<dbReference type="CD-CODE" id="91857CE7">
    <property type="entry name" value="Nucleolus"/>
</dbReference>
<dbReference type="ChiTaRS" id="LLPH">
    <property type="organism name" value="human"/>
</dbReference>
<dbReference type="GenomeRNAi" id="84298"/>
<dbReference type="Pharos" id="Q9BRT6">
    <property type="development level" value="Tbio"/>
</dbReference>
<dbReference type="PRO" id="PR:Q9BRT6"/>
<dbReference type="Proteomes" id="UP000005640">
    <property type="component" value="Chromosome 12"/>
</dbReference>
<dbReference type="RNAct" id="Q9BRT6">
    <property type="molecule type" value="protein"/>
</dbReference>
<dbReference type="Bgee" id="ENSG00000139233">
    <property type="expression patterns" value="Expressed in adrenal tissue and 168 other cell types or tissues"/>
</dbReference>
<dbReference type="ExpressionAtlas" id="Q9BRT6">
    <property type="expression patterns" value="baseline and differential"/>
</dbReference>
<dbReference type="GO" id="GO:0005694">
    <property type="term" value="C:chromosome"/>
    <property type="evidence" value="ECO:0000314"/>
    <property type="project" value="UniProtKB"/>
</dbReference>
<dbReference type="GO" id="GO:0005730">
    <property type="term" value="C:nucleolus"/>
    <property type="evidence" value="ECO:0000314"/>
    <property type="project" value="HPA"/>
</dbReference>
<dbReference type="GO" id="GO:0001099">
    <property type="term" value="F:basal RNA polymerase II transcription machinery binding"/>
    <property type="evidence" value="ECO:0000250"/>
    <property type="project" value="UniProtKB"/>
</dbReference>
<dbReference type="GO" id="GO:0003723">
    <property type="term" value="F:RNA binding"/>
    <property type="evidence" value="ECO:0007005"/>
    <property type="project" value="UniProtKB"/>
</dbReference>
<dbReference type="GO" id="GO:0097484">
    <property type="term" value="P:dendrite extension"/>
    <property type="evidence" value="ECO:0000250"/>
    <property type="project" value="UniProtKB"/>
</dbReference>
<dbReference type="GO" id="GO:0060999">
    <property type="term" value="P:positive regulation of dendritic spine development"/>
    <property type="evidence" value="ECO:0000250"/>
    <property type="project" value="UniProtKB"/>
</dbReference>
<dbReference type="InterPro" id="IPR018784">
    <property type="entry name" value="LLPH-like"/>
</dbReference>
<dbReference type="PANTHER" id="PTHR34253">
    <property type="entry name" value="PROTEIN LLP HOMOLOG"/>
    <property type="match status" value="1"/>
</dbReference>
<dbReference type="PANTHER" id="PTHR34253:SF3">
    <property type="entry name" value="PROTEIN LLP HOMOLOG"/>
    <property type="match status" value="1"/>
</dbReference>
<dbReference type="Pfam" id="PF10169">
    <property type="entry name" value="LLPH"/>
    <property type="match status" value="1"/>
</dbReference>
<evidence type="ECO:0000250" key="1">
    <source>
        <dbReference type="UniProtKB" id="Q9D945"/>
    </source>
</evidence>
<evidence type="ECO:0000256" key="2">
    <source>
        <dbReference type="SAM" id="MobiDB-lite"/>
    </source>
</evidence>
<evidence type="ECO:0000269" key="3">
    <source>
    </source>
</evidence>
<evidence type="ECO:0000303" key="4">
    <source>
    </source>
</evidence>
<evidence type="ECO:0000305" key="5"/>
<evidence type="ECO:0007744" key="6">
    <source>
        <dbReference type="PDB" id="6LSS"/>
    </source>
</evidence>
<evidence type="ECO:0007744" key="7">
    <source>
        <dbReference type="PDB" id="6LU8"/>
    </source>
</evidence>
<evidence type="ECO:0007744" key="8">
    <source>
    </source>
</evidence>
<evidence type="ECO:0007744" key="9">
    <source>
    </source>
</evidence>
<evidence type="ECO:0007744" key="10">
    <source>
    </source>
</evidence>
<sequence>MAKSLRSKWKRKMRAEKRKKNAPKEASRLKSILKLDGDVLMKDVQEIATVVVPKPKHCQEKMQCEVKDEKDDMKMETDIKRNKKTLLDQHGQYPIWMNQRQRKRLKAKREKRKGKSKAKAVKVAKGLAW</sequence>
<comment type="function">
    <text evidence="1">In hippocampal neurons, regulates dendritic and spine growth and synaptic transmission.</text>
</comment>
<comment type="subunit">
    <text evidence="1">Interacts with CTCF, MYO1C and with the transcriptional machinery, including RNA polymerase II and TBP.</text>
</comment>
<comment type="interaction">
    <interactant intactId="EBI-741396">
        <id>Q9BRT6</id>
    </interactant>
    <interactant intactId="EBI-12342761">
        <id>A0A494C108</id>
        <label>KRI1</label>
    </interactant>
    <organismsDiffer>false</organismsDiffer>
    <experiments>3</experiments>
</comment>
<comment type="interaction">
    <interactant intactId="EBI-741396">
        <id>Q9BRT6</id>
    </interactant>
    <interactant intactId="EBI-12224489">
        <id>Q8N8Y5</id>
        <label>ZFP41</label>
    </interactant>
    <organismsDiffer>false</organismsDiffer>
    <experiments>3</experiments>
</comment>
<comment type="subcellular location">
    <subcellularLocation>
        <location evidence="1">Nucleus</location>
        <location evidence="1">Nucleolus</location>
    </subcellularLocation>
    <subcellularLocation>
        <location evidence="3">Chromosome</location>
    </subcellularLocation>
    <text evidence="1 3">Cell-permeable protein. 22 hours after injection in the hippocampal area CA1, internalized by most cells at the injection site (By similarity). Localizes at the chromosome periphery during mitosis (PubMed:20813266).</text>
</comment>
<comment type="similarity">
    <text evidence="5">Belongs to the learning-associated protein family.</text>
</comment>
<feature type="chain" id="PRO_0000274346" description="Protein LLP homolog">
    <location>
        <begin position="1"/>
        <end position="129"/>
    </location>
</feature>
<feature type="region of interest" description="Disordered" evidence="2">
    <location>
        <begin position="1"/>
        <end position="27"/>
    </location>
</feature>
<feature type="region of interest" description="Disordered" evidence="2">
    <location>
        <begin position="100"/>
        <end position="129"/>
    </location>
</feature>
<feature type="compositionally biased region" description="Basic residues" evidence="2">
    <location>
        <begin position="1"/>
        <end position="21"/>
    </location>
</feature>
<feature type="compositionally biased region" description="Basic residues" evidence="2">
    <location>
        <begin position="100"/>
        <end position="122"/>
    </location>
</feature>
<feature type="cross-link" description="Glycyl lysine isopeptide (Lys-Gly) (interchain with G-Cter in SUMO2)" evidence="8 9 10">
    <location>
        <position position="67"/>
    </location>
</feature>
<feature type="cross-link" description="Glycyl lysine isopeptide (Lys-Gly) (interchain with G-Cter in SUMO2)" evidence="8 10">
    <location>
        <position position="74"/>
    </location>
</feature>
<feature type="sequence conflict" description="In Ref. 2; AAI07781." evidence="5" ref="2">
    <original>E</original>
    <variation>G</variation>
    <location>
        <position position="76"/>
    </location>
</feature>
<proteinExistence type="evidence at protein level"/>
<name>LLPH_HUMAN</name>
<gene>
    <name type="primary">LLPH</name>
    <name type="synonym">C12orf31</name>
    <name evidence="4" type="synonym">cPERP-G</name>
</gene>
<organism>
    <name type="scientific">Homo sapiens</name>
    <name type="common">Human</name>
    <dbReference type="NCBI Taxonomy" id="9606"/>
    <lineage>
        <taxon>Eukaryota</taxon>
        <taxon>Metazoa</taxon>
        <taxon>Chordata</taxon>
        <taxon>Craniata</taxon>
        <taxon>Vertebrata</taxon>
        <taxon>Euteleostomi</taxon>
        <taxon>Mammalia</taxon>
        <taxon>Eutheria</taxon>
        <taxon>Euarchontoglires</taxon>
        <taxon>Primates</taxon>
        <taxon>Haplorrhini</taxon>
        <taxon>Catarrhini</taxon>
        <taxon>Hominidae</taxon>
        <taxon>Homo</taxon>
    </lineage>
</organism>
<protein>
    <recommendedName>
        <fullName>Protein LLP homolog</fullName>
    </recommendedName>
    <alternativeName>
        <fullName>Protein LAPS18-like</fullName>
    </alternativeName>
</protein>